<sequence>MLGRTLINKHGFLIHPRRFVHLNDKSLDGTFILPSKKNHMYDVPTNDPSGILNASDIDRINNLPFFDNTSPTKETNTKEGALLSEKLASVKELFGEDPENPSFINYRFPRGLENPYFDIQVNQLKKKRLSVTQLCTTQNWCELRNFYDFYSQNLSNQLLNLKFQVQKGKKIHKSLEDETHPELNQYKSFTHNFLALTKLSMDIDNDMDALLDNWFNSINRLVSLFTKGDGHAREIVCHGFINLEDGKLVEHLLNSDSKTKENVIISGVIDHLTLRNKHNHQVQKGAAHLDTEYQSWGNILTNLLSNLKELKSNNEIVISDIKTRSVPKIPSIESVIESSKLQTMYYKFFFSHLSQDMTQTYHSFLINAKRRGLDVDAPINPTKILTFILTNPLFANDVKNLLYGLPINHSAFDNDAKGSNTFDMAAFNDLLDRGPTSFNVPIEQDEDSSESTKCVSLRDYGHFYTKWKTPLTLKYFAARLSQIYFIVGNLVSNDLMIEYYYHNDNFHNIIFPYDTLKLGTHAHDSAMVWFGGRDMHPIEPTQKNFNTYCKFCDYRHVCSWKNKNELKLIDLGKELKKIILESSMK</sequence>
<protein>
    <recommendedName>
        <fullName>Exonuclease V, mitochondrial</fullName>
        <shortName>Exo V</shortName>
        <ecNumber>3.1.-.-</ecNumber>
    </recommendedName>
    <alternativeName>
        <fullName>Defects in morphology protein 1</fullName>
    </alternativeName>
</protein>
<evidence type="ECO:0000250" key="1"/>
<evidence type="ECO:0000255" key="2"/>
<evidence type="ECO:0000305" key="3"/>
<organism>
    <name type="scientific">Saccharomyces cerevisiae (strain RM11-1a)</name>
    <name type="common">Baker's yeast</name>
    <dbReference type="NCBI Taxonomy" id="285006"/>
    <lineage>
        <taxon>Eukaryota</taxon>
        <taxon>Fungi</taxon>
        <taxon>Dikarya</taxon>
        <taxon>Ascomycota</taxon>
        <taxon>Saccharomycotina</taxon>
        <taxon>Saccharomycetes</taxon>
        <taxon>Saccharomycetales</taxon>
        <taxon>Saccharomycetaceae</taxon>
        <taxon>Saccharomyces</taxon>
    </lineage>
</organism>
<dbReference type="EC" id="3.1.-.-"/>
<dbReference type="EMBL" id="CH408048">
    <property type="protein sequence ID" value="EDV11948.1"/>
    <property type="molecule type" value="Genomic_DNA"/>
</dbReference>
<dbReference type="HOGENOM" id="CLU_019985_0_0_1"/>
<dbReference type="OrthoDB" id="41432at4893"/>
<dbReference type="Proteomes" id="UP000008335">
    <property type="component" value="Unassembled WGS sequence"/>
</dbReference>
<dbReference type="GO" id="GO:0005739">
    <property type="term" value="C:mitochondrion"/>
    <property type="evidence" value="ECO:0007669"/>
    <property type="project" value="UniProtKB-SubCell"/>
</dbReference>
<dbReference type="GO" id="GO:0005634">
    <property type="term" value="C:nucleus"/>
    <property type="evidence" value="ECO:0007669"/>
    <property type="project" value="TreeGrafter"/>
</dbReference>
<dbReference type="GO" id="GO:0051539">
    <property type="term" value="F:4 iron, 4 sulfur cluster binding"/>
    <property type="evidence" value="ECO:0007669"/>
    <property type="project" value="UniProtKB-KW"/>
</dbReference>
<dbReference type="GO" id="GO:0003677">
    <property type="term" value="F:DNA binding"/>
    <property type="evidence" value="ECO:0007669"/>
    <property type="project" value="UniProtKB-KW"/>
</dbReference>
<dbReference type="GO" id="GO:0046872">
    <property type="term" value="F:metal ion binding"/>
    <property type="evidence" value="ECO:0007669"/>
    <property type="project" value="UniProtKB-KW"/>
</dbReference>
<dbReference type="GO" id="GO:0045145">
    <property type="term" value="F:single-stranded DNA 5'-3' DNA exonuclease activity"/>
    <property type="evidence" value="ECO:0007669"/>
    <property type="project" value="InterPro"/>
</dbReference>
<dbReference type="GO" id="GO:0036297">
    <property type="term" value="P:interstrand cross-link repair"/>
    <property type="evidence" value="ECO:0007669"/>
    <property type="project" value="TreeGrafter"/>
</dbReference>
<dbReference type="GO" id="GO:0000002">
    <property type="term" value="P:mitochondrial genome maintenance"/>
    <property type="evidence" value="ECO:0007669"/>
    <property type="project" value="InterPro"/>
</dbReference>
<dbReference type="InterPro" id="IPR016610">
    <property type="entry name" value="Exo5"/>
</dbReference>
<dbReference type="InterPro" id="IPR019190">
    <property type="entry name" value="EXOV"/>
</dbReference>
<dbReference type="PANTHER" id="PTHR14464">
    <property type="entry name" value="EXONUCLEASE V"/>
    <property type="match status" value="1"/>
</dbReference>
<dbReference type="PANTHER" id="PTHR14464:SF4">
    <property type="entry name" value="EXONUCLEASE V"/>
    <property type="match status" value="1"/>
</dbReference>
<dbReference type="Pfam" id="PF09810">
    <property type="entry name" value="Exo5"/>
    <property type="match status" value="1"/>
</dbReference>
<dbReference type="PIRSF" id="PIRSF013220">
    <property type="entry name" value="UCP013220"/>
    <property type="match status" value="1"/>
</dbReference>
<gene>
    <name type="primary">EXO5</name>
    <name type="synonym">DEM1</name>
    <name type="ORF">SCRG_02806</name>
</gene>
<reference key="1">
    <citation type="submission" date="2005-03" db="EMBL/GenBank/DDBJ databases">
        <title>Annotation of the Saccharomyces cerevisiae RM11-1a genome.</title>
        <authorList>
            <consortium name="The Broad Institute Genome Sequencing Platform"/>
            <person name="Birren B.W."/>
            <person name="Lander E.S."/>
            <person name="Galagan J.E."/>
            <person name="Nusbaum C."/>
            <person name="Devon K."/>
            <person name="Cuomo C."/>
            <person name="Jaffe D.B."/>
            <person name="Butler J."/>
            <person name="Alvarez P."/>
            <person name="Gnerre S."/>
            <person name="Grabherr M."/>
            <person name="Kleber M."/>
            <person name="Mauceli E.W."/>
            <person name="Brockman W."/>
            <person name="MacCallum I.A."/>
            <person name="Rounsley S."/>
            <person name="Young S.K."/>
            <person name="LaButti K."/>
            <person name="Pushparaj V."/>
            <person name="DeCaprio D."/>
            <person name="Crawford M."/>
            <person name="Koehrsen M."/>
            <person name="Engels R."/>
            <person name="Montgomery P."/>
            <person name="Pearson M."/>
            <person name="Howarth C."/>
            <person name="Larson L."/>
            <person name="Luoma S."/>
            <person name="White J."/>
            <person name="O'Leary S."/>
            <person name="Kodira C.D."/>
            <person name="Zeng Q."/>
            <person name="Yandava C."/>
            <person name="Alvarado L."/>
            <person name="Pratt S."/>
            <person name="Kruglyak L."/>
        </authorList>
    </citation>
    <scope>NUCLEOTIDE SEQUENCE [LARGE SCALE GENOMIC DNA]</scope>
    <source>
        <strain>RM11-1a</strain>
    </source>
</reference>
<feature type="transit peptide" description="Mitochondrion" evidence="2">
    <location>
        <begin position="1"/>
        <end position="26"/>
    </location>
</feature>
<feature type="chain" id="PRO_0000406691" description="Exonuclease V, mitochondrial">
    <location>
        <begin position="27"/>
        <end position="585"/>
    </location>
</feature>
<feature type="binding site" evidence="1">
    <location>
        <position position="141"/>
    </location>
    <ligand>
        <name>[4Fe-4S] cluster</name>
        <dbReference type="ChEBI" id="CHEBI:49883"/>
    </ligand>
</feature>
<feature type="binding site" evidence="1">
    <location>
        <position position="549"/>
    </location>
    <ligand>
        <name>[4Fe-4S] cluster</name>
        <dbReference type="ChEBI" id="CHEBI:49883"/>
    </ligand>
</feature>
<feature type="binding site" evidence="1">
    <location>
        <position position="552"/>
    </location>
    <ligand>
        <name>[4Fe-4S] cluster</name>
        <dbReference type="ChEBI" id="CHEBI:49883"/>
    </ligand>
</feature>
<feature type="binding site" evidence="1">
    <location>
        <position position="558"/>
    </location>
    <ligand>
        <name>[4Fe-4S] cluster</name>
        <dbReference type="ChEBI" id="CHEBI:49883"/>
    </ligand>
</feature>
<name>EXO5_YEAS1</name>
<proteinExistence type="inferred from homology"/>
<comment type="function">
    <text evidence="1">Single strand DNA specific 5' exonuclease involved in mitochondrial DNA replication and recombination. Releases dinucleotides as main products of catalysis. Has the capacity to slide across 5'double-stranded DNA or 5'RNA sequences and resumes cutting two nucleotides downstream of the double-stranded-to-single-stranded junction or RNA-to-DNA junction, respectively (By similarity).</text>
</comment>
<comment type="cofactor">
    <cofactor evidence="1">
        <name>Mg(2+)</name>
        <dbReference type="ChEBI" id="CHEBI:18420"/>
    </cofactor>
</comment>
<comment type="cofactor">
    <cofactor evidence="1">
        <name>[4Fe-4S] cluster</name>
        <dbReference type="ChEBI" id="CHEBI:49883"/>
    </cofactor>
    <text evidence="1">Binds 1 [4Fe-4S] cluster.</text>
</comment>
<comment type="subunit">
    <text evidence="1">Monomer.</text>
</comment>
<comment type="subcellular location">
    <subcellularLocation>
        <location evidence="1">Mitochondrion</location>
    </subcellularLocation>
</comment>
<comment type="similarity">
    <text evidence="3">Belongs to the EXO5 family.</text>
</comment>
<keyword id="KW-0004">4Fe-4S</keyword>
<keyword id="KW-0238">DNA-binding</keyword>
<keyword id="KW-0269">Exonuclease</keyword>
<keyword id="KW-0378">Hydrolase</keyword>
<keyword id="KW-0408">Iron</keyword>
<keyword id="KW-0411">Iron-sulfur</keyword>
<keyword id="KW-0460">Magnesium</keyword>
<keyword id="KW-0479">Metal-binding</keyword>
<keyword id="KW-0496">Mitochondrion</keyword>
<keyword id="KW-0540">Nuclease</keyword>
<keyword id="KW-0809">Transit peptide</keyword>
<accession>B3LMZ5</accession>